<proteinExistence type="inferred from homology"/>
<organism>
    <name type="scientific">Escherichia coli O6:K15:H31 (strain 536 / UPEC)</name>
    <dbReference type="NCBI Taxonomy" id="362663"/>
    <lineage>
        <taxon>Bacteria</taxon>
        <taxon>Pseudomonadati</taxon>
        <taxon>Pseudomonadota</taxon>
        <taxon>Gammaproteobacteria</taxon>
        <taxon>Enterobacterales</taxon>
        <taxon>Enterobacteriaceae</taxon>
        <taxon>Escherichia</taxon>
    </lineage>
</organism>
<evidence type="ECO:0000255" key="1">
    <source>
        <dbReference type="HAMAP-Rule" id="MF_00724"/>
    </source>
</evidence>
<accession>Q0TGQ7</accession>
<comment type="subcellular location">
    <subcellularLocation>
        <location evidence="1">Bacterial flagellum basal body</location>
    </subcellularLocation>
</comment>
<comment type="similarity">
    <text evidence="1">Belongs to the FliE family.</text>
</comment>
<gene>
    <name evidence="1" type="primary">fliE</name>
    <name type="ordered locus">ECP_1871</name>
</gene>
<protein>
    <recommendedName>
        <fullName evidence="1">Flagellar hook-basal body complex protein FliE</fullName>
    </recommendedName>
</protein>
<name>FLIE_ECOL5</name>
<sequence length="104" mass="11155">MSAIQGIEGVISQLQATAMSARAQESLPQPTISFAGQLHAALDRISDTQTVARTQAEKFTLGEPGVALNDVMTDMQKASVSMQMGIQVRNKLVAAYQEVMSMQV</sequence>
<feature type="chain" id="PRO_1000045854" description="Flagellar hook-basal body complex protein FliE">
    <location>
        <begin position="1"/>
        <end position="104"/>
    </location>
</feature>
<keyword id="KW-0975">Bacterial flagellum</keyword>
<reference key="1">
    <citation type="journal article" date="2006" name="Mol. Microbiol.">
        <title>Role of pathogenicity island-associated integrases in the genome plasticity of uropathogenic Escherichia coli strain 536.</title>
        <authorList>
            <person name="Hochhut B."/>
            <person name="Wilde C."/>
            <person name="Balling G."/>
            <person name="Middendorf B."/>
            <person name="Dobrindt U."/>
            <person name="Brzuszkiewicz E."/>
            <person name="Gottschalk G."/>
            <person name="Carniel E."/>
            <person name="Hacker J."/>
        </authorList>
    </citation>
    <scope>NUCLEOTIDE SEQUENCE [LARGE SCALE GENOMIC DNA]</scope>
    <source>
        <strain>536 / UPEC</strain>
    </source>
</reference>
<dbReference type="EMBL" id="CP000247">
    <property type="protein sequence ID" value="ABG69872.1"/>
    <property type="molecule type" value="Genomic_DNA"/>
</dbReference>
<dbReference type="RefSeq" id="WP_001274301.1">
    <property type="nucleotide sequence ID" value="NC_008253.1"/>
</dbReference>
<dbReference type="SMR" id="Q0TGQ7"/>
<dbReference type="KEGG" id="ecp:ECP_1871"/>
<dbReference type="HOGENOM" id="CLU_147249_0_2_6"/>
<dbReference type="Proteomes" id="UP000009182">
    <property type="component" value="Chromosome"/>
</dbReference>
<dbReference type="GO" id="GO:0009425">
    <property type="term" value="C:bacterial-type flagellum basal body"/>
    <property type="evidence" value="ECO:0007669"/>
    <property type="project" value="UniProtKB-SubCell"/>
</dbReference>
<dbReference type="GO" id="GO:0003774">
    <property type="term" value="F:cytoskeletal motor activity"/>
    <property type="evidence" value="ECO:0007669"/>
    <property type="project" value="InterPro"/>
</dbReference>
<dbReference type="GO" id="GO:0005198">
    <property type="term" value="F:structural molecule activity"/>
    <property type="evidence" value="ECO:0007669"/>
    <property type="project" value="InterPro"/>
</dbReference>
<dbReference type="GO" id="GO:0071973">
    <property type="term" value="P:bacterial-type flagellum-dependent cell motility"/>
    <property type="evidence" value="ECO:0007669"/>
    <property type="project" value="InterPro"/>
</dbReference>
<dbReference type="HAMAP" id="MF_00724">
    <property type="entry name" value="FliE"/>
    <property type="match status" value="1"/>
</dbReference>
<dbReference type="InterPro" id="IPR001624">
    <property type="entry name" value="FliE"/>
</dbReference>
<dbReference type="NCBIfam" id="TIGR00205">
    <property type="entry name" value="fliE"/>
    <property type="match status" value="1"/>
</dbReference>
<dbReference type="PANTHER" id="PTHR34653">
    <property type="match status" value="1"/>
</dbReference>
<dbReference type="PANTHER" id="PTHR34653:SF1">
    <property type="entry name" value="FLAGELLAR HOOK-BASAL BODY COMPLEX PROTEIN FLIE"/>
    <property type="match status" value="1"/>
</dbReference>
<dbReference type="Pfam" id="PF02049">
    <property type="entry name" value="FliE"/>
    <property type="match status" value="1"/>
</dbReference>
<dbReference type="PRINTS" id="PR01006">
    <property type="entry name" value="FLGHOOKFLIE"/>
</dbReference>